<reference key="1">
    <citation type="journal article" date="2009" name="PLoS ONE">
        <title>Genome sequence of the endosymbiont Rickettsia peacockii and comparison with virulent Rickettsia rickettsii: identification of virulence factors.</title>
        <authorList>
            <person name="Felsheim R.F."/>
            <person name="Kurtti T.J."/>
            <person name="Munderloh U.G."/>
        </authorList>
    </citation>
    <scope>NUCLEOTIDE SEQUENCE [LARGE SCALE GENOMIC DNA]</scope>
    <source>
        <strain>Rustic</strain>
    </source>
</reference>
<comment type="function">
    <text evidence="1">This protein binds specifically to 23S rRNA; its binding is stimulated by other ribosomal proteins, e.g. L4, L17, and L20. It is important during the early stages of 50S assembly. It makes multiple contacts with different domains of the 23S rRNA in the assembled 50S subunit and ribosome (By similarity).</text>
</comment>
<comment type="function">
    <text evidence="1">The globular domain of the protein is located near the polypeptide exit tunnel on the outside of the subunit, while an extended beta-hairpin is found that lines the wall of the exit tunnel in the center of the 70S ribosome.</text>
</comment>
<comment type="subunit">
    <text evidence="1">Part of the 50S ribosomal subunit.</text>
</comment>
<comment type="similarity">
    <text evidence="1">Belongs to the universal ribosomal protein uL22 family.</text>
</comment>
<evidence type="ECO:0000255" key="1">
    <source>
        <dbReference type="HAMAP-Rule" id="MF_01331"/>
    </source>
</evidence>
<evidence type="ECO:0000305" key="2"/>
<protein>
    <recommendedName>
        <fullName evidence="1">Large ribosomal subunit protein uL22</fullName>
    </recommendedName>
    <alternativeName>
        <fullName evidence="2">50S ribosomal protein L22</fullName>
    </alternativeName>
</protein>
<sequence>MVQENKNFATAQAKSIRVSSRKLNLVAAFIRNMKVSEALVQLTFSPKRIAKVVKDCLQSAVANAENNLGLDIDRLVITKAIVGKALVMKRVMPRAKGRATRINKFFSNLYITVTEKEDN</sequence>
<accession>C4K2H4</accession>
<gene>
    <name evidence="1" type="primary">rplV</name>
    <name type="ordered locus">RPR_06205</name>
</gene>
<keyword id="KW-0687">Ribonucleoprotein</keyword>
<keyword id="KW-0689">Ribosomal protein</keyword>
<keyword id="KW-0694">RNA-binding</keyword>
<keyword id="KW-0699">rRNA-binding</keyword>
<feature type="chain" id="PRO_1000214615" description="Large ribosomal subunit protein uL22">
    <location>
        <begin position="1"/>
        <end position="119"/>
    </location>
</feature>
<organism>
    <name type="scientific">Rickettsia peacockii (strain Rustic)</name>
    <dbReference type="NCBI Taxonomy" id="562019"/>
    <lineage>
        <taxon>Bacteria</taxon>
        <taxon>Pseudomonadati</taxon>
        <taxon>Pseudomonadota</taxon>
        <taxon>Alphaproteobacteria</taxon>
        <taxon>Rickettsiales</taxon>
        <taxon>Rickettsiaceae</taxon>
        <taxon>Rickettsieae</taxon>
        <taxon>Rickettsia</taxon>
        <taxon>spotted fever group</taxon>
    </lineage>
</organism>
<name>RL22_RICPU</name>
<dbReference type="EMBL" id="CP001227">
    <property type="protein sequence ID" value="ACR47771.1"/>
    <property type="molecule type" value="Genomic_DNA"/>
</dbReference>
<dbReference type="RefSeq" id="WP_012736943.1">
    <property type="nucleotide sequence ID" value="NC_012730.1"/>
</dbReference>
<dbReference type="SMR" id="C4K2H4"/>
<dbReference type="KEGG" id="rpk:RPR_06205"/>
<dbReference type="HOGENOM" id="CLU_083987_3_0_5"/>
<dbReference type="Proteomes" id="UP000005015">
    <property type="component" value="Chromosome"/>
</dbReference>
<dbReference type="GO" id="GO:0022625">
    <property type="term" value="C:cytosolic large ribosomal subunit"/>
    <property type="evidence" value="ECO:0007669"/>
    <property type="project" value="TreeGrafter"/>
</dbReference>
<dbReference type="GO" id="GO:0019843">
    <property type="term" value="F:rRNA binding"/>
    <property type="evidence" value="ECO:0007669"/>
    <property type="project" value="UniProtKB-UniRule"/>
</dbReference>
<dbReference type="GO" id="GO:0003735">
    <property type="term" value="F:structural constituent of ribosome"/>
    <property type="evidence" value="ECO:0007669"/>
    <property type="project" value="InterPro"/>
</dbReference>
<dbReference type="GO" id="GO:0006412">
    <property type="term" value="P:translation"/>
    <property type="evidence" value="ECO:0007669"/>
    <property type="project" value="UniProtKB-UniRule"/>
</dbReference>
<dbReference type="CDD" id="cd00336">
    <property type="entry name" value="Ribosomal_L22"/>
    <property type="match status" value="1"/>
</dbReference>
<dbReference type="Gene3D" id="3.90.470.10">
    <property type="entry name" value="Ribosomal protein L22/L17"/>
    <property type="match status" value="1"/>
</dbReference>
<dbReference type="HAMAP" id="MF_01331_B">
    <property type="entry name" value="Ribosomal_uL22_B"/>
    <property type="match status" value="1"/>
</dbReference>
<dbReference type="InterPro" id="IPR001063">
    <property type="entry name" value="Ribosomal_uL22"/>
</dbReference>
<dbReference type="InterPro" id="IPR005727">
    <property type="entry name" value="Ribosomal_uL22_bac/chlpt-type"/>
</dbReference>
<dbReference type="InterPro" id="IPR047867">
    <property type="entry name" value="Ribosomal_uL22_bac/org-type"/>
</dbReference>
<dbReference type="InterPro" id="IPR018260">
    <property type="entry name" value="Ribosomal_uL22_CS"/>
</dbReference>
<dbReference type="InterPro" id="IPR036394">
    <property type="entry name" value="Ribosomal_uL22_sf"/>
</dbReference>
<dbReference type="NCBIfam" id="TIGR01044">
    <property type="entry name" value="rplV_bact"/>
    <property type="match status" value="1"/>
</dbReference>
<dbReference type="PANTHER" id="PTHR13501">
    <property type="entry name" value="CHLOROPLAST 50S RIBOSOMAL PROTEIN L22-RELATED"/>
    <property type="match status" value="1"/>
</dbReference>
<dbReference type="PANTHER" id="PTHR13501:SF8">
    <property type="entry name" value="LARGE RIBOSOMAL SUBUNIT PROTEIN UL22M"/>
    <property type="match status" value="1"/>
</dbReference>
<dbReference type="Pfam" id="PF00237">
    <property type="entry name" value="Ribosomal_L22"/>
    <property type="match status" value="1"/>
</dbReference>
<dbReference type="SUPFAM" id="SSF54843">
    <property type="entry name" value="Ribosomal protein L22"/>
    <property type="match status" value="1"/>
</dbReference>
<dbReference type="PROSITE" id="PS00464">
    <property type="entry name" value="RIBOSOMAL_L22"/>
    <property type="match status" value="1"/>
</dbReference>
<proteinExistence type="inferred from homology"/>